<gene>
    <name evidence="1" type="primary">rnfH</name>
    <name type="ordered locus">SEN2606</name>
</gene>
<name>RNFH_SALEP</name>
<sequence>MPDKLVVEVAYALPEKQYLQRVTLEEGATVEEAIRASGLLELRTDIDLAKNKVGIYSRPVKLTDTVQDGDRVEIYRPLIADPKALRRQRAEKSAGR</sequence>
<proteinExistence type="inferred from homology"/>
<accession>B5QUH3</accession>
<organism>
    <name type="scientific">Salmonella enteritidis PT4 (strain P125109)</name>
    <dbReference type="NCBI Taxonomy" id="550537"/>
    <lineage>
        <taxon>Bacteria</taxon>
        <taxon>Pseudomonadati</taxon>
        <taxon>Pseudomonadota</taxon>
        <taxon>Gammaproteobacteria</taxon>
        <taxon>Enterobacterales</taxon>
        <taxon>Enterobacteriaceae</taxon>
        <taxon>Salmonella</taxon>
    </lineage>
</organism>
<evidence type="ECO:0000255" key="1">
    <source>
        <dbReference type="HAMAP-Rule" id="MF_00460"/>
    </source>
</evidence>
<protein>
    <recommendedName>
        <fullName evidence="1">Protein RnfH</fullName>
    </recommendedName>
</protein>
<dbReference type="EMBL" id="AM933172">
    <property type="protein sequence ID" value="CAR34188.1"/>
    <property type="molecule type" value="Genomic_DNA"/>
</dbReference>
<dbReference type="RefSeq" id="WP_001112990.1">
    <property type="nucleotide sequence ID" value="NC_011294.1"/>
</dbReference>
<dbReference type="SMR" id="B5QUH3"/>
<dbReference type="KEGG" id="set:SEN2606"/>
<dbReference type="HOGENOM" id="CLU_150721_1_0_6"/>
<dbReference type="Proteomes" id="UP000000613">
    <property type="component" value="Chromosome"/>
</dbReference>
<dbReference type="Gene3D" id="3.10.20.280">
    <property type="entry name" value="RnfH-like"/>
    <property type="match status" value="1"/>
</dbReference>
<dbReference type="HAMAP" id="MF_00460">
    <property type="entry name" value="UPF0125_RnfH"/>
    <property type="match status" value="1"/>
</dbReference>
<dbReference type="InterPro" id="IPR016155">
    <property type="entry name" value="Mopterin_synth/thiamin_S_b"/>
</dbReference>
<dbReference type="InterPro" id="IPR005346">
    <property type="entry name" value="RnfH"/>
</dbReference>
<dbReference type="InterPro" id="IPR037021">
    <property type="entry name" value="RnfH_sf"/>
</dbReference>
<dbReference type="NCBIfam" id="NF002490">
    <property type="entry name" value="PRK01777.1"/>
    <property type="match status" value="1"/>
</dbReference>
<dbReference type="PANTHER" id="PTHR37483">
    <property type="entry name" value="UPF0125 PROTEIN RATB"/>
    <property type="match status" value="1"/>
</dbReference>
<dbReference type="PANTHER" id="PTHR37483:SF1">
    <property type="entry name" value="UPF0125 PROTEIN RATB"/>
    <property type="match status" value="1"/>
</dbReference>
<dbReference type="Pfam" id="PF03658">
    <property type="entry name" value="Ub-RnfH"/>
    <property type="match status" value="1"/>
</dbReference>
<dbReference type="SUPFAM" id="SSF54285">
    <property type="entry name" value="MoaD/ThiS"/>
    <property type="match status" value="1"/>
</dbReference>
<reference key="1">
    <citation type="journal article" date="2008" name="Genome Res.">
        <title>Comparative genome analysis of Salmonella enteritidis PT4 and Salmonella gallinarum 287/91 provides insights into evolutionary and host adaptation pathways.</title>
        <authorList>
            <person name="Thomson N.R."/>
            <person name="Clayton D.J."/>
            <person name="Windhorst D."/>
            <person name="Vernikos G."/>
            <person name="Davidson S."/>
            <person name="Churcher C."/>
            <person name="Quail M.A."/>
            <person name="Stevens M."/>
            <person name="Jones M.A."/>
            <person name="Watson M."/>
            <person name="Barron A."/>
            <person name="Layton A."/>
            <person name="Pickard D."/>
            <person name="Kingsley R.A."/>
            <person name="Bignell A."/>
            <person name="Clark L."/>
            <person name="Harris B."/>
            <person name="Ormond D."/>
            <person name="Abdellah Z."/>
            <person name="Brooks K."/>
            <person name="Cherevach I."/>
            <person name="Chillingworth T."/>
            <person name="Woodward J."/>
            <person name="Norberczak H."/>
            <person name="Lord A."/>
            <person name="Arrowsmith C."/>
            <person name="Jagels K."/>
            <person name="Moule S."/>
            <person name="Mungall K."/>
            <person name="Saunders M."/>
            <person name="Whitehead S."/>
            <person name="Chabalgoity J.A."/>
            <person name="Maskell D."/>
            <person name="Humphreys T."/>
            <person name="Roberts M."/>
            <person name="Barrow P.A."/>
            <person name="Dougan G."/>
            <person name="Parkhill J."/>
        </authorList>
    </citation>
    <scope>NUCLEOTIDE SEQUENCE [LARGE SCALE GENOMIC DNA]</scope>
    <source>
        <strain>P125109</strain>
    </source>
</reference>
<comment type="similarity">
    <text evidence="1">Belongs to the UPF0125 (RnfH) family.</text>
</comment>
<feature type="chain" id="PRO_1000200193" description="Protein RnfH">
    <location>
        <begin position="1"/>
        <end position="96"/>
    </location>
</feature>